<sequence>LGNVLVCVLAHHFGKEFTPQVQAAYQKVVAGVANALAHKYH</sequence>
<proteinExistence type="evidence at transcript level"/>
<organism>
    <name type="scientific">Colobus guereza</name>
    <name type="common">Mantled guereza</name>
    <name type="synonym">Eastern black-and-white colobus monkey</name>
    <dbReference type="NCBI Taxonomy" id="33548"/>
    <lineage>
        <taxon>Eukaryota</taxon>
        <taxon>Metazoa</taxon>
        <taxon>Chordata</taxon>
        <taxon>Craniata</taxon>
        <taxon>Vertebrata</taxon>
        <taxon>Euteleostomi</taxon>
        <taxon>Mammalia</taxon>
        <taxon>Eutheria</taxon>
        <taxon>Euarchontoglires</taxon>
        <taxon>Primates</taxon>
        <taxon>Haplorrhini</taxon>
        <taxon>Catarrhini</taxon>
        <taxon>Cercopithecidae</taxon>
        <taxon>Colobinae</taxon>
        <taxon>Colobus</taxon>
    </lineage>
</organism>
<gene>
    <name type="primary">HBB</name>
</gene>
<name>HBB_COLGU</name>
<dbReference type="EMBL" id="AF205409">
    <property type="protein sequence ID" value="AAF23760.1"/>
    <property type="molecule type" value="Genomic_DNA"/>
</dbReference>
<dbReference type="SMR" id="Q9TT33"/>
<dbReference type="GO" id="GO:0072562">
    <property type="term" value="C:blood microparticle"/>
    <property type="evidence" value="ECO:0007669"/>
    <property type="project" value="TreeGrafter"/>
</dbReference>
<dbReference type="GO" id="GO:0031838">
    <property type="term" value="C:haptoglobin-hemoglobin complex"/>
    <property type="evidence" value="ECO:0007669"/>
    <property type="project" value="TreeGrafter"/>
</dbReference>
<dbReference type="GO" id="GO:0005833">
    <property type="term" value="C:hemoglobin complex"/>
    <property type="evidence" value="ECO:0007669"/>
    <property type="project" value="TreeGrafter"/>
</dbReference>
<dbReference type="GO" id="GO:0031720">
    <property type="term" value="F:haptoglobin binding"/>
    <property type="evidence" value="ECO:0007669"/>
    <property type="project" value="TreeGrafter"/>
</dbReference>
<dbReference type="GO" id="GO:0020037">
    <property type="term" value="F:heme binding"/>
    <property type="evidence" value="ECO:0007669"/>
    <property type="project" value="InterPro"/>
</dbReference>
<dbReference type="GO" id="GO:0046872">
    <property type="term" value="F:metal ion binding"/>
    <property type="evidence" value="ECO:0007669"/>
    <property type="project" value="UniProtKB-KW"/>
</dbReference>
<dbReference type="GO" id="GO:0043177">
    <property type="term" value="F:organic acid binding"/>
    <property type="evidence" value="ECO:0007669"/>
    <property type="project" value="TreeGrafter"/>
</dbReference>
<dbReference type="GO" id="GO:0019825">
    <property type="term" value="F:oxygen binding"/>
    <property type="evidence" value="ECO:0007669"/>
    <property type="project" value="InterPro"/>
</dbReference>
<dbReference type="GO" id="GO:0005344">
    <property type="term" value="F:oxygen carrier activity"/>
    <property type="evidence" value="ECO:0007669"/>
    <property type="project" value="UniProtKB-KW"/>
</dbReference>
<dbReference type="GO" id="GO:0004601">
    <property type="term" value="F:peroxidase activity"/>
    <property type="evidence" value="ECO:0007669"/>
    <property type="project" value="TreeGrafter"/>
</dbReference>
<dbReference type="GO" id="GO:0042744">
    <property type="term" value="P:hydrogen peroxide catabolic process"/>
    <property type="evidence" value="ECO:0007669"/>
    <property type="project" value="TreeGrafter"/>
</dbReference>
<dbReference type="Gene3D" id="1.10.490.10">
    <property type="entry name" value="Globins"/>
    <property type="match status" value="1"/>
</dbReference>
<dbReference type="InterPro" id="IPR000971">
    <property type="entry name" value="Globin"/>
</dbReference>
<dbReference type="InterPro" id="IPR009050">
    <property type="entry name" value="Globin-like_sf"/>
</dbReference>
<dbReference type="InterPro" id="IPR012292">
    <property type="entry name" value="Globin/Proto"/>
</dbReference>
<dbReference type="InterPro" id="IPR050056">
    <property type="entry name" value="Hemoglobin_oxygen_transport"/>
</dbReference>
<dbReference type="PANTHER" id="PTHR11442">
    <property type="entry name" value="HEMOGLOBIN FAMILY MEMBER"/>
    <property type="match status" value="1"/>
</dbReference>
<dbReference type="PANTHER" id="PTHR11442:SF7">
    <property type="entry name" value="HEMOGLOBIN SUBUNIT EPSILON"/>
    <property type="match status" value="1"/>
</dbReference>
<dbReference type="Pfam" id="PF00042">
    <property type="entry name" value="Globin"/>
    <property type="match status" value="1"/>
</dbReference>
<dbReference type="SUPFAM" id="SSF46458">
    <property type="entry name" value="Globin-like"/>
    <property type="match status" value="1"/>
</dbReference>
<dbReference type="PROSITE" id="PS01033">
    <property type="entry name" value="GLOBIN"/>
    <property type="match status" value="1"/>
</dbReference>
<comment type="function">
    <text>Involved in oxygen transport from the lung to the various peripheral tissues.</text>
</comment>
<comment type="subunit">
    <text>Heterotetramer of two alpha chains and two beta chains.</text>
</comment>
<comment type="tissue specificity">
    <text>Red blood cells.</text>
</comment>
<comment type="similarity">
    <text evidence="2">Belongs to the globin family.</text>
</comment>
<feature type="chain" id="PRO_0000052931" description="Hemoglobin subunit beta">
    <location>
        <begin position="1" status="less than"/>
        <end position="41"/>
    </location>
</feature>
<feature type="domain" description="Globin" evidence="2">
    <location>
        <begin position="1"/>
        <end position="41"/>
    </location>
</feature>
<feature type="modified residue" description="N6-acetyllysine" evidence="1">
    <location>
        <position position="39"/>
    </location>
</feature>
<feature type="non-terminal residue">
    <location>
        <position position="1"/>
    </location>
</feature>
<reference key="1">
    <citation type="journal article" date="2000" name="Mol. Biol. Evol.">
        <title>Strand symmetry around the beta-globin origin of replication in primates.</title>
        <authorList>
            <person name="Francino M.P."/>
            <person name="Ochman H."/>
        </authorList>
    </citation>
    <scope>NUCLEOTIDE SEQUENCE [GENOMIC DNA]</scope>
    <source>
        <tissue>Blood</tissue>
    </source>
</reference>
<keyword id="KW-0007">Acetylation</keyword>
<keyword id="KW-0349">Heme</keyword>
<keyword id="KW-0408">Iron</keyword>
<keyword id="KW-0479">Metal-binding</keyword>
<keyword id="KW-0561">Oxygen transport</keyword>
<keyword id="KW-0813">Transport</keyword>
<evidence type="ECO:0000250" key="1">
    <source>
        <dbReference type="UniProtKB" id="P68871"/>
    </source>
</evidence>
<evidence type="ECO:0000255" key="2">
    <source>
        <dbReference type="PROSITE-ProRule" id="PRU00238"/>
    </source>
</evidence>
<accession>Q9TT33</accession>
<protein>
    <recommendedName>
        <fullName>Hemoglobin subunit beta</fullName>
    </recommendedName>
    <alternativeName>
        <fullName>Beta-globin</fullName>
    </alternativeName>
    <alternativeName>
        <fullName>Hemoglobin beta chain</fullName>
    </alternativeName>
</protein>